<gene>
    <name evidence="1" type="primary">dnaK</name>
    <name type="ordered locus">LAF_0751</name>
</gene>
<organism>
    <name type="scientific">Limosilactobacillus fermentum (strain NBRC 3956 / LMG 18251)</name>
    <name type="common">Lactobacillus fermentum</name>
    <dbReference type="NCBI Taxonomy" id="334390"/>
    <lineage>
        <taxon>Bacteria</taxon>
        <taxon>Bacillati</taxon>
        <taxon>Bacillota</taxon>
        <taxon>Bacilli</taxon>
        <taxon>Lactobacillales</taxon>
        <taxon>Lactobacillaceae</taxon>
        <taxon>Limosilactobacillus</taxon>
    </lineage>
</organism>
<keyword id="KW-0067">ATP-binding</keyword>
<keyword id="KW-0143">Chaperone</keyword>
<keyword id="KW-0547">Nucleotide-binding</keyword>
<keyword id="KW-0597">Phosphoprotein</keyword>
<keyword id="KW-1185">Reference proteome</keyword>
<keyword id="KW-0346">Stress response</keyword>
<proteinExistence type="inferred from homology"/>
<reference key="1">
    <citation type="journal article" date="2008" name="DNA Res.">
        <title>Comparative genome analysis of Lactobacillus reuteri and Lactobacillus fermentum reveal a genomic island for reuterin and cobalamin production.</title>
        <authorList>
            <person name="Morita H."/>
            <person name="Toh H."/>
            <person name="Fukuda S."/>
            <person name="Horikawa H."/>
            <person name="Oshima K."/>
            <person name="Suzuki T."/>
            <person name="Murakami M."/>
            <person name="Hisamatsu S."/>
            <person name="Kato Y."/>
            <person name="Takizawa T."/>
            <person name="Fukuoka H."/>
            <person name="Yoshimura T."/>
            <person name="Itoh K."/>
            <person name="O'Sullivan D.J."/>
            <person name="McKay L.L."/>
            <person name="Ohno H."/>
            <person name="Kikuchi J."/>
            <person name="Masaoka T."/>
            <person name="Hattori M."/>
        </authorList>
    </citation>
    <scope>NUCLEOTIDE SEQUENCE [LARGE SCALE GENOMIC DNA]</scope>
    <source>
        <strain>NBRC 3956 / LMG 18251</strain>
    </source>
</reference>
<evidence type="ECO:0000255" key="1">
    <source>
        <dbReference type="HAMAP-Rule" id="MF_00332"/>
    </source>
</evidence>
<evidence type="ECO:0000256" key="2">
    <source>
        <dbReference type="SAM" id="MobiDB-lite"/>
    </source>
</evidence>
<dbReference type="EMBL" id="AP008937">
    <property type="protein sequence ID" value="BAG27087.1"/>
    <property type="molecule type" value="Genomic_DNA"/>
</dbReference>
<dbReference type="RefSeq" id="WP_003685154.1">
    <property type="nucleotide sequence ID" value="NC_010610.1"/>
</dbReference>
<dbReference type="SMR" id="B2GBQ5"/>
<dbReference type="KEGG" id="lfe:LAF_0751"/>
<dbReference type="eggNOG" id="COG0443">
    <property type="taxonomic scope" value="Bacteria"/>
</dbReference>
<dbReference type="HOGENOM" id="CLU_005965_2_1_9"/>
<dbReference type="Proteomes" id="UP000001697">
    <property type="component" value="Chromosome"/>
</dbReference>
<dbReference type="GO" id="GO:0005524">
    <property type="term" value="F:ATP binding"/>
    <property type="evidence" value="ECO:0007669"/>
    <property type="project" value="UniProtKB-UniRule"/>
</dbReference>
<dbReference type="GO" id="GO:0140662">
    <property type="term" value="F:ATP-dependent protein folding chaperone"/>
    <property type="evidence" value="ECO:0007669"/>
    <property type="project" value="InterPro"/>
</dbReference>
<dbReference type="GO" id="GO:0051082">
    <property type="term" value="F:unfolded protein binding"/>
    <property type="evidence" value="ECO:0007669"/>
    <property type="project" value="InterPro"/>
</dbReference>
<dbReference type="CDD" id="cd10234">
    <property type="entry name" value="ASKHA_NBD_HSP70_DnaK-like"/>
    <property type="match status" value="1"/>
</dbReference>
<dbReference type="FunFam" id="2.60.34.10:FF:000014">
    <property type="entry name" value="Chaperone protein DnaK HSP70"/>
    <property type="match status" value="1"/>
</dbReference>
<dbReference type="FunFam" id="1.20.1270.10:FF:000001">
    <property type="entry name" value="Molecular chaperone DnaK"/>
    <property type="match status" value="1"/>
</dbReference>
<dbReference type="FunFam" id="3.30.420.40:FF:000071">
    <property type="entry name" value="Molecular chaperone DnaK"/>
    <property type="match status" value="1"/>
</dbReference>
<dbReference type="FunFam" id="3.90.640.10:FF:000003">
    <property type="entry name" value="Molecular chaperone DnaK"/>
    <property type="match status" value="1"/>
</dbReference>
<dbReference type="Gene3D" id="1.20.1270.10">
    <property type="match status" value="1"/>
</dbReference>
<dbReference type="Gene3D" id="3.30.420.40">
    <property type="match status" value="2"/>
</dbReference>
<dbReference type="Gene3D" id="3.90.640.10">
    <property type="entry name" value="Actin, Chain A, domain 4"/>
    <property type="match status" value="1"/>
</dbReference>
<dbReference type="Gene3D" id="2.60.34.10">
    <property type="entry name" value="Substrate Binding Domain Of DNAk, Chain A, domain 1"/>
    <property type="match status" value="1"/>
</dbReference>
<dbReference type="HAMAP" id="MF_00332">
    <property type="entry name" value="DnaK"/>
    <property type="match status" value="1"/>
</dbReference>
<dbReference type="InterPro" id="IPR043129">
    <property type="entry name" value="ATPase_NBD"/>
</dbReference>
<dbReference type="InterPro" id="IPR012725">
    <property type="entry name" value="Chaperone_DnaK"/>
</dbReference>
<dbReference type="InterPro" id="IPR018181">
    <property type="entry name" value="Heat_shock_70_CS"/>
</dbReference>
<dbReference type="InterPro" id="IPR029048">
    <property type="entry name" value="HSP70_C_sf"/>
</dbReference>
<dbReference type="InterPro" id="IPR029047">
    <property type="entry name" value="HSP70_peptide-bd_sf"/>
</dbReference>
<dbReference type="InterPro" id="IPR013126">
    <property type="entry name" value="Hsp_70_fam"/>
</dbReference>
<dbReference type="NCBIfam" id="NF001413">
    <property type="entry name" value="PRK00290.1"/>
    <property type="match status" value="1"/>
</dbReference>
<dbReference type="NCBIfam" id="TIGR02350">
    <property type="entry name" value="prok_dnaK"/>
    <property type="match status" value="1"/>
</dbReference>
<dbReference type="PANTHER" id="PTHR19375">
    <property type="entry name" value="HEAT SHOCK PROTEIN 70KDA"/>
    <property type="match status" value="1"/>
</dbReference>
<dbReference type="Pfam" id="PF00012">
    <property type="entry name" value="HSP70"/>
    <property type="match status" value="2"/>
</dbReference>
<dbReference type="PRINTS" id="PR00301">
    <property type="entry name" value="HEATSHOCK70"/>
</dbReference>
<dbReference type="SUPFAM" id="SSF53067">
    <property type="entry name" value="Actin-like ATPase domain"/>
    <property type="match status" value="2"/>
</dbReference>
<dbReference type="SUPFAM" id="SSF100934">
    <property type="entry name" value="Heat shock protein 70kD (HSP70), C-terminal subdomain"/>
    <property type="match status" value="1"/>
</dbReference>
<dbReference type="SUPFAM" id="SSF100920">
    <property type="entry name" value="Heat shock protein 70kD (HSP70), peptide-binding domain"/>
    <property type="match status" value="1"/>
</dbReference>
<dbReference type="PROSITE" id="PS00297">
    <property type="entry name" value="HSP70_1"/>
    <property type="match status" value="1"/>
</dbReference>
<dbReference type="PROSITE" id="PS00329">
    <property type="entry name" value="HSP70_2"/>
    <property type="match status" value="1"/>
</dbReference>
<dbReference type="PROSITE" id="PS01036">
    <property type="entry name" value="HSP70_3"/>
    <property type="match status" value="1"/>
</dbReference>
<name>DNAK_LIMF3</name>
<comment type="function">
    <text evidence="1">Acts as a chaperone.</text>
</comment>
<comment type="induction">
    <text evidence="1">By stress conditions e.g. heat shock.</text>
</comment>
<comment type="similarity">
    <text evidence="1">Belongs to the heat shock protein 70 family.</text>
</comment>
<accession>B2GBQ5</accession>
<protein>
    <recommendedName>
        <fullName evidence="1">Chaperone protein DnaK</fullName>
    </recommendedName>
    <alternativeName>
        <fullName evidence="1">HSP70</fullName>
    </alternativeName>
    <alternativeName>
        <fullName evidence="1">Heat shock 70 kDa protein</fullName>
    </alternativeName>
    <alternativeName>
        <fullName evidence="1">Heat shock protein 70</fullName>
    </alternativeName>
</protein>
<feature type="chain" id="PRO_1000119718" description="Chaperone protein DnaK">
    <location>
        <begin position="1"/>
        <end position="618"/>
    </location>
</feature>
<feature type="region of interest" description="Disordered" evidence="2">
    <location>
        <begin position="526"/>
        <end position="557"/>
    </location>
</feature>
<feature type="region of interest" description="Disordered" evidence="2">
    <location>
        <begin position="578"/>
        <end position="618"/>
    </location>
</feature>
<feature type="compositionally biased region" description="Low complexity" evidence="2">
    <location>
        <begin position="578"/>
        <end position="593"/>
    </location>
</feature>
<feature type="compositionally biased region" description="Acidic residues" evidence="2">
    <location>
        <begin position="603"/>
        <end position="618"/>
    </location>
</feature>
<feature type="modified residue" description="Phosphothreonine; by autocatalysis" evidence="1">
    <location>
        <position position="176"/>
    </location>
</feature>
<sequence>MASNKIIGIDLGTTNSAVAVMEGNEPKIITNPEGGRTTPSVVSFKNGEVQVGEVAKRQAITNPNTVKSIKSHMGEAGYTVDIEGKKYTPQEISAMILQYIKKYAEDYIGDTVTEAVITVPAYFNDAQRQATKDAGKIAGLDVKRIINEPTASSLAYGLDKKDRDEKILVYDLGGGTFDVSILELGDGVFQVLSTNGDTHLGGDDFDQKIMDWLIDGFKQENGIDLSQDKMALQRLKDAAEKAKKDVSGVQEAQISLPFITSGDNGPLHLEKTLTRAQFNQLTNDLVERTKQPVLNALKDAELSFSDIDEVILNGGSTRIPAVQEMVKSLTGKEPNHSINPDEAVALGAAIQGGVLTGDVKDVVLLDVTPLSLGIETMGGVFTKLIDRNTTIPTSKSQVFSTAADNQPAVDIHVLQGERPMAADNKTLGNFQLTDIPPAPRGVPQIKVTFDIDKNGIVNVSAEDQGTHKKQNITIKSNSGLSDEEIERMKKDAEANAEADKKKKEEADLRNETDQLLFQTDKTLEELKGKVSDDEIKKAQDAKDALQKAKDDNNLEDMKAKKDDLNKIVQDLTVKLYQQAQQENQANGGQPTGDQGDGKKDDDNTVDGDFEEVNPDDKK</sequence>